<gene>
    <name type="ordered locus">RC0039</name>
</gene>
<protein>
    <recommendedName>
        <fullName>Uncharacterized protein RC0039</fullName>
    </recommendedName>
</protein>
<sequence>MTNNQFSEDTKKIADQIKDALMGISDDLVLESKEVEEIFEELSQNEEFEYEMERMLSILNEQTMDLTQLQSRIILLIRKYLGKTKNLKLKMLKMDEKLINKNVAEVSNYLMHQHSKIVRDANKNLTNPKDKLQGLTKQARIDLKRLLKSFAVYQIYMFMNPKRIAGETKLMNFAYNMIKGGMKLAKKYEGGKEQEIKSYSPRLIKKLKKAHVGFKKSGGISI</sequence>
<feature type="chain" id="PRO_0000101303" description="Uncharacterized protein RC0039">
    <location>
        <begin position="1"/>
        <end position="222"/>
    </location>
</feature>
<feature type="coiled-coil region" evidence="1">
    <location>
        <begin position="43"/>
        <end position="73"/>
    </location>
</feature>
<evidence type="ECO:0000255" key="1"/>
<accession>Q92JM8</accession>
<proteinExistence type="predicted"/>
<name>Y039_RICCN</name>
<keyword id="KW-0175">Coiled coil</keyword>
<reference key="1">
    <citation type="journal article" date="2001" name="Science">
        <title>Mechanisms of evolution in Rickettsia conorii and R. prowazekii.</title>
        <authorList>
            <person name="Ogata H."/>
            <person name="Audic S."/>
            <person name="Renesto-Audiffren P."/>
            <person name="Fournier P.-E."/>
            <person name="Barbe V."/>
            <person name="Samson D."/>
            <person name="Roux V."/>
            <person name="Cossart P."/>
            <person name="Weissenbach J."/>
            <person name="Claverie J.-M."/>
            <person name="Raoult D."/>
        </authorList>
    </citation>
    <scope>NUCLEOTIDE SEQUENCE [LARGE SCALE GENOMIC DNA]</scope>
    <source>
        <strain>ATCC VR-613 / Malish 7</strain>
    </source>
</reference>
<dbReference type="EMBL" id="AE006914">
    <property type="protein sequence ID" value="AAL02577.1"/>
    <property type="molecule type" value="Genomic_DNA"/>
</dbReference>
<dbReference type="PIR" id="G97704">
    <property type="entry name" value="G97704"/>
</dbReference>
<dbReference type="RefSeq" id="WP_010976726.1">
    <property type="nucleotide sequence ID" value="NC_003103.1"/>
</dbReference>
<dbReference type="SMR" id="Q92JM8"/>
<dbReference type="GeneID" id="928626"/>
<dbReference type="KEGG" id="rco:RC0039"/>
<dbReference type="PATRIC" id="fig|272944.4.peg.46"/>
<dbReference type="HOGENOM" id="CLU_1244545_0_0_5"/>
<dbReference type="Proteomes" id="UP000000816">
    <property type="component" value="Chromosome"/>
</dbReference>
<dbReference type="InterPro" id="IPR020171">
    <property type="entry name" value="Uncharacterised_RC0039"/>
</dbReference>
<dbReference type="Pfam" id="PF17372">
    <property type="entry name" value="DUF5394"/>
    <property type="match status" value="1"/>
</dbReference>
<organism>
    <name type="scientific">Rickettsia conorii (strain ATCC VR-613 / Malish 7)</name>
    <dbReference type="NCBI Taxonomy" id="272944"/>
    <lineage>
        <taxon>Bacteria</taxon>
        <taxon>Pseudomonadati</taxon>
        <taxon>Pseudomonadota</taxon>
        <taxon>Alphaproteobacteria</taxon>
        <taxon>Rickettsiales</taxon>
        <taxon>Rickettsiaceae</taxon>
        <taxon>Rickettsieae</taxon>
        <taxon>Rickettsia</taxon>
        <taxon>spotted fever group</taxon>
    </lineage>
</organism>